<protein>
    <recommendedName>
        <fullName evidence="1">Small ribosomal subunit protein uS9</fullName>
    </recommendedName>
    <alternativeName>
        <fullName evidence="2">30S ribosomal protein S9</fullName>
    </alternativeName>
</protein>
<gene>
    <name evidence="1" type="primary">rpsI</name>
    <name type="ordered locus">GFO_0135</name>
</gene>
<name>RS9_CHRFK</name>
<reference key="1">
    <citation type="journal article" date="2006" name="Environ. Microbiol.">
        <title>Whole genome analysis of the marine Bacteroidetes'Gramella forsetii' reveals adaptations to degradation of polymeric organic matter.</title>
        <authorList>
            <person name="Bauer M."/>
            <person name="Kube M."/>
            <person name="Teeling H."/>
            <person name="Richter M."/>
            <person name="Lombardot T."/>
            <person name="Allers E."/>
            <person name="Wuerdemann C.A."/>
            <person name="Quast C."/>
            <person name="Kuhl H."/>
            <person name="Knaust F."/>
            <person name="Woebken D."/>
            <person name="Bischof K."/>
            <person name="Mussmann M."/>
            <person name="Choudhuri J.V."/>
            <person name="Meyer F."/>
            <person name="Reinhardt R."/>
            <person name="Amann R.I."/>
            <person name="Gloeckner F.O."/>
        </authorList>
    </citation>
    <scope>NUCLEOTIDE SEQUENCE [LARGE SCALE GENOMIC DNA]</scope>
    <source>
        <strain>DSM 17595 / CGMCC 1.15422 / KT0803</strain>
    </source>
</reference>
<proteinExistence type="inferred from homology"/>
<feature type="chain" id="PRO_1000051225" description="Small ribosomal subunit protein uS9">
    <location>
        <begin position="1"/>
        <end position="128"/>
    </location>
</feature>
<accession>A0LXM9</accession>
<keyword id="KW-0687">Ribonucleoprotein</keyword>
<keyword id="KW-0689">Ribosomal protein</keyword>
<evidence type="ECO:0000255" key="1">
    <source>
        <dbReference type="HAMAP-Rule" id="MF_00532"/>
    </source>
</evidence>
<evidence type="ECO:0000305" key="2"/>
<organism>
    <name type="scientific">Christiangramia forsetii (strain DSM 17595 / CGMCC 1.15422 / KT0803)</name>
    <name type="common">Gramella forsetii</name>
    <dbReference type="NCBI Taxonomy" id="411154"/>
    <lineage>
        <taxon>Bacteria</taxon>
        <taxon>Pseudomonadati</taxon>
        <taxon>Bacteroidota</taxon>
        <taxon>Flavobacteriia</taxon>
        <taxon>Flavobacteriales</taxon>
        <taxon>Flavobacteriaceae</taxon>
        <taxon>Christiangramia</taxon>
    </lineage>
</organism>
<sequence>MEVIHKIGRRKTAVARVYVSEGKGNITVNKKDLKDYFTTGTLLYKVNQPMMLTENEGNFDVKINVYGGGITGQAEAIRLALSRAMVALDEENHGALKPEGLLTRDPRMVERKKYGQKKARKKFQFSKR</sequence>
<dbReference type="EMBL" id="CU207366">
    <property type="protein sequence ID" value="CAL65124.1"/>
    <property type="molecule type" value="Genomic_DNA"/>
</dbReference>
<dbReference type="RefSeq" id="WP_011708062.1">
    <property type="nucleotide sequence ID" value="NC_008571.1"/>
</dbReference>
<dbReference type="SMR" id="A0LXM9"/>
<dbReference type="STRING" id="411154.GFO_0135"/>
<dbReference type="KEGG" id="gfo:GFO_0135"/>
<dbReference type="eggNOG" id="COG0103">
    <property type="taxonomic scope" value="Bacteria"/>
</dbReference>
<dbReference type="HOGENOM" id="CLU_046483_2_1_10"/>
<dbReference type="OrthoDB" id="9803965at2"/>
<dbReference type="Proteomes" id="UP000000755">
    <property type="component" value="Chromosome"/>
</dbReference>
<dbReference type="GO" id="GO:0022627">
    <property type="term" value="C:cytosolic small ribosomal subunit"/>
    <property type="evidence" value="ECO:0007669"/>
    <property type="project" value="TreeGrafter"/>
</dbReference>
<dbReference type="GO" id="GO:0003723">
    <property type="term" value="F:RNA binding"/>
    <property type="evidence" value="ECO:0007669"/>
    <property type="project" value="TreeGrafter"/>
</dbReference>
<dbReference type="GO" id="GO:0003735">
    <property type="term" value="F:structural constituent of ribosome"/>
    <property type="evidence" value="ECO:0007669"/>
    <property type="project" value="InterPro"/>
</dbReference>
<dbReference type="GO" id="GO:0006412">
    <property type="term" value="P:translation"/>
    <property type="evidence" value="ECO:0007669"/>
    <property type="project" value="UniProtKB-UniRule"/>
</dbReference>
<dbReference type="FunFam" id="3.30.230.10:FF:000001">
    <property type="entry name" value="30S ribosomal protein S9"/>
    <property type="match status" value="1"/>
</dbReference>
<dbReference type="Gene3D" id="3.30.230.10">
    <property type="match status" value="1"/>
</dbReference>
<dbReference type="HAMAP" id="MF_00532_B">
    <property type="entry name" value="Ribosomal_uS9_B"/>
    <property type="match status" value="1"/>
</dbReference>
<dbReference type="InterPro" id="IPR020568">
    <property type="entry name" value="Ribosomal_Su5_D2-typ_SF"/>
</dbReference>
<dbReference type="InterPro" id="IPR000754">
    <property type="entry name" value="Ribosomal_uS9"/>
</dbReference>
<dbReference type="InterPro" id="IPR023035">
    <property type="entry name" value="Ribosomal_uS9_bac/plastid"/>
</dbReference>
<dbReference type="InterPro" id="IPR014721">
    <property type="entry name" value="Ribsml_uS5_D2-typ_fold_subgr"/>
</dbReference>
<dbReference type="NCBIfam" id="NF001099">
    <property type="entry name" value="PRK00132.1"/>
    <property type="match status" value="1"/>
</dbReference>
<dbReference type="PANTHER" id="PTHR21569">
    <property type="entry name" value="RIBOSOMAL PROTEIN S9"/>
    <property type="match status" value="1"/>
</dbReference>
<dbReference type="PANTHER" id="PTHR21569:SF1">
    <property type="entry name" value="SMALL RIBOSOMAL SUBUNIT PROTEIN US9M"/>
    <property type="match status" value="1"/>
</dbReference>
<dbReference type="Pfam" id="PF00380">
    <property type="entry name" value="Ribosomal_S9"/>
    <property type="match status" value="1"/>
</dbReference>
<dbReference type="SUPFAM" id="SSF54211">
    <property type="entry name" value="Ribosomal protein S5 domain 2-like"/>
    <property type="match status" value="1"/>
</dbReference>
<comment type="similarity">
    <text evidence="1">Belongs to the universal ribosomal protein uS9 family.</text>
</comment>